<dbReference type="EMBL" id="X73124">
    <property type="protein sequence ID" value="CAA51580.1"/>
    <property type="molecule type" value="Genomic_DNA"/>
</dbReference>
<dbReference type="EMBL" id="AL009126">
    <property type="protein sequence ID" value="CAB15857.1"/>
    <property type="molecule type" value="Genomic_DNA"/>
</dbReference>
<dbReference type="PIR" id="S39679">
    <property type="entry name" value="S39679"/>
</dbReference>
<dbReference type="SMR" id="P39592"/>
<dbReference type="FunCoup" id="P39592">
    <property type="interactions" value="60"/>
</dbReference>
<dbReference type="STRING" id="224308.BSU38310"/>
<dbReference type="PaxDb" id="224308-BSU38310"/>
<dbReference type="EnsemblBacteria" id="CAB15857">
    <property type="protein sequence ID" value="CAB15857"/>
    <property type="gene ID" value="BSU_38310"/>
</dbReference>
<dbReference type="GeneID" id="937626"/>
<dbReference type="KEGG" id="bsu:BSU38310"/>
<dbReference type="PATRIC" id="fig|224308.179.peg.4147"/>
<dbReference type="eggNOG" id="COG0583">
    <property type="taxonomic scope" value="Bacteria"/>
</dbReference>
<dbReference type="InParanoid" id="P39592"/>
<dbReference type="OrthoDB" id="9803735at2"/>
<dbReference type="PhylomeDB" id="P39592"/>
<dbReference type="BioCyc" id="BSUB:BSU38310-MONOMER"/>
<dbReference type="Proteomes" id="UP000001570">
    <property type="component" value="Chromosome"/>
</dbReference>
<dbReference type="GO" id="GO:0005829">
    <property type="term" value="C:cytosol"/>
    <property type="evidence" value="ECO:0000318"/>
    <property type="project" value="GO_Central"/>
</dbReference>
<dbReference type="GO" id="GO:0003700">
    <property type="term" value="F:DNA-binding transcription factor activity"/>
    <property type="evidence" value="ECO:0007669"/>
    <property type="project" value="InterPro"/>
</dbReference>
<dbReference type="GO" id="GO:0043565">
    <property type="term" value="F:sequence-specific DNA binding"/>
    <property type="evidence" value="ECO:0000318"/>
    <property type="project" value="GO_Central"/>
</dbReference>
<dbReference type="GO" id="GO:0006355">
    <property type="term" value="P:regulation of DNA-templated transcription"/>
    <property type="evidence" value="ECO:0000318"/>
    <property type="project" value="GO_Central"/>
</dbReference>
<dbReference type="CDD" id="cd08438">
    <property type="entry name" value="PBP2_CidR"/>
    <property type="match status" value="1"/>
</dbReference>
<dbReference type="FunFam" id="1.10.10.10:FF:000001">
    <property type="entry name" value="LysR family transcriptional regulator"/>
    <property type="match status" value="1"/>
</dbReference>
<dbReference type="Gene3D" id="3.40.190.290">
    <property type="match status" value="1"/>
</dbReference>
<dbReference type="Gene3D" id="1.10.10.10">
    <property type="entry name" value="Winged helix-like DNA-binding domain superfamily/Winged helix DNA-binding domain"/>
    <property type="match status" value="1"/>
</dbReference>
<dbReference type="InterPro" id="IPR050950">
    <property type="entry name" value="HTH-type_LysR_regulators"/>
</dbReference>
<dbReference type="InterPro" id="IPR005119">
    <property type="entry name" value="LysR_subst-bd"/>
</dbReference>
<dbReference type="InterPro" id="IPR000847">
    <property type="entry name" value="Tscrpt_reg_HTH_LysR"/>
</dbReference>
<dbReference type="InterPro" id="IPR036388">
    <property type="entry name" value="WH-like_DNA-bd_sf"/>
</dbReference>
<dbReference type="InterPro" id="IPR036390">
    <property type="entry name" value="WH_DNA-bd_sf"/>
</dbReference>
<dbReference type="NCBIfam" id="NF047520">
    <property type="entry name" value="trans_act_CidR"/>
    <property type="match status" value="1"/>
</dbReference>
<dbReference type="PANTHER" id="PTHR30419">
    <property type="entry name" value="HTH-TYPE TRANSCRIPTIONAL REGULATOR YBHD"/>
    <property type="match status" value="1"/>
</dbReference>
<dbReference type="PANTHER" id="PTHR30419:SF8">
    <property type="entry name" value="NITROGEN ASSIMILATION TRANSCRIPTIONAL ACTIVATOR-RELATED"/>
    <property type="match status" value="1"/>
</dbReference>
<dbReference type="Pfam" id="PF00126">
    <property type="entry name" value="HTH_1"/>
    <property type="match status" value="1"/>
</dbReference>
<dbReference type="Pfam" id="PF03466">
    <property type="entry name" value="LysR_substrate"/>
    <property type="match status" value="1"/>
</dbReference>
<dbReference type="PRINTS" id="PR00039">
    <property type="entry name" value="HTHLYSR"/>
</dbReference>
<dbReference type="SUPFAM" id="SSF53850">
    <property type="entry name" value="Periplasmic binding protein-like II"/>
    <property type="match status" value="1"/>
</dbReference>
<dbReference type="SUPFAM" id="SSF46785">
    <property type="entry name" value="Winged helix' DNA-binding domain"/>
    <property type="match status" value="1"/>
</dbReference>
<dbReference type="PROSITE" id="PS50931">
    <property type="entry name" value="HTH_LYSR"/>
    <property type="match status" value="1"/>
</dbReference>
<comment type="similarity">
    <text evidence="2">Belongs to the LysR transcriptional regulatory family.</text>
</comment>
<proteinExistence type="inferred from homology"/>
<evidence type="ECO:0000255" key="1">
    <source>
        <dbReference type="PROSITE-ProRule" id="PRU00253"/>
    </source>
</evidence>
<evidence type="ECO:0000305" key="2"/>
<accession>P39592</accession>
<feature type="chain" id="PRO_0000105823" description="Uncharacterized HTH-type transcriptional regulator YwbI">
    <location>
        <begin position="1"/>
        <end position="301"/>
    </location>
</feature>
<feature type="domain" description="HTH lysR-type" evidence="1">
    <location>
        <begin position="1"/>
        <end position="58"/>
    </location>
</feature>
<feature type="DNA-binding region" description="H-T-H motif" evidence="1">
    <location>
        <begin position="18"/>
        <end position="37"/>
    </location>
</feature>
<sequence>MDIRHLTYFLEVARLKSFTKASQSLYVSQPTISKMIKNLEEELGIELFYRNGRQVELTDAGHSMYVQAQEIIKSFQNLTSELNDIMEVKKGHVRIGLPPMIGSGFFPRVLGDFRENYPNVTFQLVEDGSIKVQEGVGDGSLDIGVVVLPANEDIFHSFTIVKETLMLVVHPSHRLADEKECQLRELKDEPFIFFREDFVLHNRIMTECIKAGFRPHIIYETSQWDFISEMVSANLGIGLLPERICRGLDPEKVKVIPLVDPVIPWHLAIIWRKDRYLSFAARAWLEHTKSYLWDPKKDSKG</sequence>
<name>YWBI_BACSU</name>
<gene>
    <name type="primary">ywbI</name>
    <name type="ordered locus">BSU38310</name>
    <name type="ORF">ipa-24d</name>
</gene>
<protein>
    <recommendedName>
        <fullName>Uncharacterized HTH-type transcriptional regulator YwbI</fullName>
    </recommendedName>
</protein>
<organism>
    <name type="scientific">Bacillus subtilis (strain 168)</name>
    <dbReference type="NCBI Taxonomy" id="224308"/>
    <lineage>
        <taxon>Bacteria</taxon>
        <taxon>Bacillati</taxon>
        <taxon>Bacillota</taxon>
        <taxon>Bacilli</taxon>
        <taxon>Bacillales</taxon>
        <taxon>Bacillaceae</taxon>
        <taxon>Bacillus</taxon>
    </lineage>
</organism>
<reference key="1">
    <citation type="journal article" date="1993" name="Mol. Microbiol.">
        <title>Bacillus subtilis genome project: cloning and sequencing of the 97 kb region from 325 degrees to 333 degrees.</title>
        <authorList>
            <person name="Glaser P."/>
            <person name="Kunst F."/>
            <person name="Arnaud M."/>
            <person name="Coudart M.P."/>
            <person name="Gonzales W."/>
            <person name="Hullo M.-F."/>
            <person name="Ionescu M."/>
            <person name="Lubochinsky B."/>
            <person name="Marcelino L."/>
            <person name="Moszer I."/>
            <person name="Presecan E."/>
            <person name="Santana M."/>
            <person name="Schneider E."/>
            <person name="Schweizer J."/>
            <person name="Vertes A."/>
            <person name="Rapoport G."/>
            <person name="Danchin A."/>
        </authorList>
    </citation>
    <scope>NUCLEOTIDE SEQUENCE [GENOMIC DNA]</scope>
    <source>
        <strain>168</strain>
    </source>
</reference>
<reference key="2">
    <citation type="journal article" date="1997" name="Nature">
        <title>The complete genome sequence of the Gram-positive bacterium Bacillus subtilis.</title>
        <authorList>
            <person name="Kunst F."/>
            <person name="Ogasawara N."/>
            <person name="Moszer I."/>
            <person name="Albertini A.M."/>
            <person name="Alloni G."/>
            <person name="Azevedo V."/>
            <person name="Bertero M.G."/>
            <person name="Bessieres P."/>
            <person name="Bolotin A."/>
            <person name="Borchert S."/>
            <person name="Borriss R."/>
            <person name="Boursier L."/>
            <person name="Brans A."/>
            <person name="Braun M."/>
            <person name="Brignell S.C."/>
            <person name="Bron S."/>
            <person name="Brouillet S."/>
            <person name="Bruschi C.V."/>
            <person name="Caldwell B."/>
            <person name="Capuano V."/>
            <person name="Carter N.M."/>
            <person name="Choi S.-K."/>
            <person name="Codani J.-J."/>
            <person name="Connerton I.F."/>
            <person name="Cummings N.J."/>
            <person name="Daniel R.A."/>
            <person name="Denizot F."/>
            <person name="Devine K.M."/>
            <person name="Duesterhoeft A."/>
            <person name="Ehrlich S.D."/>
            <person name="Emmerson P.T."/>
            <person name="Entian K.-D."/>
            <person name="Errington J."/>
            <person name="Fabret C."/>
            <person name="Ferrari E."/>
            <person name="Foulger D."/>
            <person name="Fritz C."/>
            <person name="Fujita M."/>
            <person name="Fujita Y."/>
            <person name="Fuma S."/>
            <person name="Galizzi A."/>
            <person name="Galleron N."/>
            <person name="Ghim S.-Y."/>
            <person name="Glaser P."/>
            <person name="Goffeau A."/>
            <person name="Golightly E.J."/>
            <person name="Grandi G."/>
            <person name="Guiseppi G."/>
            <person name="Guy B.J."/>
            <person name="Haga K."/>
            <person name="Haiech J."/>
            <person name="Harwood C.R."/>
            <person name="Henaut A."/>
            <person name="Hilbert H."/>
            <person name="Holsappel S."/>
            <person name="Hosono S."/>
            <person name="Hullo M.-F."/>
            <person name="Itaya M."/>
            <person name="Jones L.-M."/>
            <person name="Joris B."/>
            <person name="Karamata D."/>
            <person name="Kasahara Y."/>
            <person name="Klaerr-Blanchard M."/>
            <person name="Klein C."/>
            <person name="Kobayashi Y."/>
            <person name="Koetter P."/>
            <person name="Koningstein G."/>
            <person name="Krogh S."/>
            <person name="Kumano M."/>
            <person name="Kurita K."/>
            <person name="Lapidus A."/>
            <person name="Lardinois S."/>
            <person name="Lauber J."/>
            <person name="Lazarevic V."/>
            <person name="Lee S.-M."/>
            <person name="Levine A."/>
            <person name="Liu H."/>
            <person name="Masuda S."/>
            <person name="Mauel C."/>
            <person name="Medigue C."/>
            <person name="Medina N."/>
            <person name="Mellado R.P."/>
            <person name="Mizuno M."/>
            <person name="Moestl D."/>
            <person name="Nakai S."/>
            <person name="Noback M."/>
            <person name="Noone D."/>
            <person name="O'Reilly M."/>
            <person name="Ogawa K."/>
            <person name="Ogiwara A."/>
            <person name="Oudega B."/>
            <person name="Park S.-H."/>
            <person name="Parro V."/>
            <person name="Pohl T.M."/>
            <person name="Portetelle D."/>
            <person name="Porwollik S."/>
            <person name="Prescott A.M."/>
            <person name="Presecan E."/>
            <person name="Pujic P."/>
            <person name="Purnelle B."/>
            <person name="Rapoport G."/>
            <person name="Rey M."/>
            <person name="Reynolds S."/>
            <person name="Rieger M."/>
            <person name="Rivolta C."/>
            <person name="Rocha E."/>
            <person name="Roche B."/>
            <person name="Rose M."/>
            <person name="Sadaie Y."/>
            <person name="Sato T."/>
            <person name="Scanlan E."/>
            <person name="Schleich S."/>
            <person name="Schroeter R."/>
            <person name="Scoffone F."/>
            <person name="Sekiguchi J."/>
            <person name="Sekowska A."/>
            <person name="Seror S.J."/>
            <person name="Serror P."/>
            <person name="Shin B.-S."/>
            <person name="Soldo B."/>
            <person name="Sorokin A."/>
            <person name="Tacconi E."/>
            <person name="Takagi T."/>
            <person name="Takahashi H."/>
            <person name="Takemaru K."/>
            <person name="Takeuchi M."/>
            <person name="Tamakoshi A."/>
            <person name="Tanaka T."/>
            <person name="Terpstra P."/>
            <person name="Tognoni A."/>
            <person name="Tosato V."/>
            <person name="Uchiyama S."/>
            <person name="Vandenbol M."/>
            <person name="Vannier F."/>
            <person name="Vassarotti A."/>
            <person name="Viari A."/>
            <person name="Wambutt R."/>
            <person name="Wedler E."/>
            <person name="Wedler H."/>
            <person name="Weitzenegger T."/>
            <person name="Winters P."/>
            <person name="Wipat A."/>
            <person name="Yamamoto H."/>
            <person name="Yamane K."/>
            <person name="Yasumoto K."/>
            <person name="Yata K."/>
            <person name="Yoshida K."/>
            <person name="Yoshikawa H.-F."/>
            <person name="Zumstein E."/>
            <person name="Yoshikawa H."/>
            <person name="Danchin A."/>
        </authorList>
    </citation>
    <scope>NUCLEOTIDE SEQUENCE [LARGE SCALE GENOMIC DNA]</scope>
    <source>
        <strain>168</strain>
    </source>
</reference>
<keyword id="KW-0238">DNA-binding</keyword>
<keyword id="KW-1185">Reference proteome</keyword>
<keyword id="KW-0804">Transcription</keyword>
<keyword id="KW-0805">Transcription regulation</keyword>